<proteinExistence type="inferred from homology"/>
<protein>
    <recommendedName>
        <fullName evidence="1">Ubiquinone biosynthesis O-methyltransferase</fullName>
    </recommendedName>
    <alternativeName>
        <fullName evidence="1">2-polyprenyl-6-hydroxyphenol methylase</fullName>
        <ecNumber evidence="1">2.1.1.222</ecNumber>
    </alternativeName>
    <alternativeName>
        <fullName evidence="1">3-demethylubiquinone 3-O-methyltransferase</fullName>
        <ecNumber evidence="1">2.1.1.64</ecNumber>
    </alternativeName>
</protein>
<organism>
    <name type="scientific">Brucella melitensis biotype 2 (strain ATCC 23457)</name>
    <dbReference type="NCBI Taxonomy" id="546272"/>
    <lineage>
        <taxon>Bacteria</taxon>
        <taxon>Pseudomonadati</taxon>
        <taxon>Pseudomonadota</taxon>
        <taxon>Alphaproteobacteria</taxon>
        <taxon>Hyphomicrobiales</taxon>
        <taxon>Brucellaceae</taxon>
        <taxon>Brucella/Ochrobactrum group</taxon>
        <taxon>Brucella</taxon>
    </lineage>
</organism>
<keyword id="KW-0489">Methyltransferase</keyword>
<keyword id="KW-0949">S-adenosyl-L-methionine</keyword>
<keyword id="KW-0808">Transferase</keyword>
<keyword id="KW-0831">Ubiquinone biosynthesis</keyword>
<dbReference type="EC" id="2.1.1.222" evidence="1"/>
<dbReference type="EC" id="2.1.1.64" evidence="1"/>
<dbReference type="EMBL" id="CP001488">
    <property type="protein sequence ID" value="ACO01590.1"/>
    <property type="molecule type" value="Genomic_DNA"/>
</dbReference>
<dbReference type="RefSeq" id="WP_004684402.1">
    <property type="nucleotide sequence ID" value="NC_012441.1"/>
</dbReference>
<dbReference type="SMR" id="C0RFB8"/>
<dbReference type="GeneID" id="29593530"/>
<dbReference type="KEGG" id="bmi:BMEA_A1926"/>
<dbReference type="HOGENOM" id="CLU_042432_0_0_5"/>
<dbReference type="UniPathway" id="UPA00232"/>
<dbReference type="Proteomes" id="UP000001748">
    <property type="component" value="Chromosome I"/>
</dbReference>
<dbReference type="GO" id="GO:0102208">
    <property type="term" value="F:2-polyprenyl-6-hydroxyphenol methylase activity"/>
    <property type="evidence" value="ECO:0007669"/>
    <property type="project" value="UniProtKB-EC"/>
</dbReference>
<dbReference type="GO" id="GO:0061542">
    <property type="term" value="F:3-demethylubiquinol 3-O-methyltransferase activity"/>
    <property type="evidence" value="ECO:0007669"/>
    <property type="project" value="UniProtKB-UniRule"/>
</dbReference>
<dbReference type="GO" id="GO:0010420">
    <property type="term" value="F:polyprenyldihydroxybenzoate methyltransferase activity"/>
    <property type="evidence" value="ECO:0007669"/>
    <property type="project" value="InterPro"/>
</dbReference>
<dbReference type="GO" id="GO:0032259">
    <property type="term" value="P:methylation"/>
    <property type="evidence" value="ECO:0007669"/>
    <property type="project" value="UniProtKB-KW"/>
</dbReference>
<dbReference type="CDD" id="cd02440">
    <property type="entry name" value="AdoMet_MTases"/>
    <property type="match status" value="1"/>
</dbReference>
<dbReference type="Gene3D" id="3.40.50.150">
    <property type="entry name" value="Vaccinia Virus protein VP39"/>
    <property type="match status" value="1"/>
</dbReference>
<dbReference type="HAMAP" id="MF_00472">
    <property type="entry name" value="UbiG"/>
    <property type="match status" value="1"/>
</dbReference>
<dbReference type="InterPro" id="IPR029063">
    <property type="entry name" value="SAM-dependent_MTases_sf"/>
</dbReference>
<dbReference type="InterPro" id="IPR010233">
    <property type="entry name" value="UbiG_MeTrfase"/>
</dbReference>
<dbReference type="NCBIfam" id="TIGR01983">
    <property type="entry name" value="UbiG"/>
    <property type="match status" value="1"/>
</dbReference>
<dbReference type="PANTHER" id="PTHR43464">
    <property type="entry name" value="METHYLTRANSFERASE"/>
    <property type="match status" value="1"/>
</dbReference>
<dbReference type="PANTHER" id="PTHR43464:SF19">
    <property type="entry name" value="UBIQUINONE BIOSYNTHESIS O-METHYLTRANSFERASE, MITOCHONDRIAL"/>
    <property type="match status" value="1"/>
</dbReference>
<dbReference type="Pfam" id="PF13489">
    <property type="entry name" value="Methyltransf_23"/>
    <property type="match status" value="1"/>
</dbReference>
<dbReference type="SUPFAM" id="SSF53335">
    <property type="entry name" value="S-adenosyl-L-methionine-dependent methyltransferases"/>
    <property type="match status" value="1"/>
</dbReference>
<evidence type="ECO:0000255" key="1">
    <source>
        <dbReference type="HAMAP-Rule" id="MF_00472"/>
    </source>
</evidence>
<gene>
    <name evidence="1" type="primary">ubiG</name>
    <name type="ordered locus">BMEA_A1926</name>
</gene>
<feature type="chain" id="PRO_1000135500" description="Ubiquinone biosynthesis O-methyltransferase">
    <location>
        <begin position="1"/>
        <end position="248"/>
    </location>
</feature>
<feature type="binding site" evidence="1">
    <location>
        <position position="41"/>
    </location>
    <ligand>
        <name>S-adenosyl-L-methionine</name>
        <dbReference type="ChEBI" id="CHEBI:59789"/>
    </ligand>
</feature>
<feature type="binding site" evidence="1">
    <location>
        <position position="72"/>
    </location>
    <ligand>
        <name>S-adenosyl-L-methionine</name>
        <dbReference type="ChEBI" id="CHEBI:59789"/>
    </ligand>
</feature>
<feature type="binding site" evidence="1">
    <location>
        <position position="93"/>
    </location>
    <ligand>
        <name>S-adenosyl-L-methionine</name>
        <dbReference type="ChEBI" id="CHEBI:59789"/>
    </ligand>
</feature>
<feature type="binding site" evidence="1">
    <location>
        <position position="136"/>
    </location>
    <ligand>
        <name>S-adenosyl-L-methionine</name>
        <dbReference type="ChEBI" id="CHEBI:59789"/>
    </ligand>
</feature>
<sequence>MTETARTTIDASEIEHFSRIAAQWWDPQGKFRPLHKFNPTRLAYIKEKVCAKFNRDPNAPRPLEGLRFLDIGCGGGLLCEPMARLGATVIGADASATNIEVAKIHAAQSSLDIDYRATTTEALADAGEKFDVVLNMEVVEHVSDVDLFMSATSAMVKPGGLMFVATINRTLKAYGLAIIGAEYVLRWLPRGTHQYEKLVRPEELEAAFSKADLRLIDKLGVTYNPLADSWNRSRDMDVNYMVLAERPA</sequence>
<comment type="function">
    <text evidence="1">O-methyltransferase that catalyzes the 2 O-methylation steps in the ubiquinone biosynthetic pathway.</text>
</comment>
<comment type="catalytic activity">
    <reaction evidence="1">
        <text>a 3-demethylubiquinol + S-adenosyl-L-methionine = a ubiquinol + S-adenosyl-L-homocysteine + H(+)</text>
        <dbReference type="Rhea" id="RHEA:44380"/>
        <dbReference type="Rhea" id="RHEA-COMP:9566"/>
        <dbReference type="Rhea" id="RHEA-COMP:10914"/>
        <dbReference type="ChEBI" id="CHEBI:15378"/>
        <dbReference type="ChEBI" id="CHEBI:17976"/>
        <dbReference type="ChEBI" id="CHEBI:57856"/>
        <dbReference type="ChEBI" id="CHEBI:59789"/>
        <dbReference type="ChEBI" id="CHEBI:84422"/>
        <dbReference type="EC" id="2.1.1.64"/>
    </reaction>
</comment>
<comment type="catalytic activity">
    <reaction evidence="1">
        <text>a 3-(all-trans-polyprenyl)benzene-1,2-diol + S-adenosyl-L-methionine = a 2-methoxy-6-(all-trans-polyprenyl)phenol + S-adenosyl-L-homocysteine + H(+)</text>
        <dbReference type="Rhea" id="RHEA:31411"/>
        <dbReference type="Rhea" id="RHEA-COMP:9550"/>
        <dbReference type="Rhea" id="RHEA-COMP:9551"/>
        <dbReference type="ChEBI" id="CHEBI:15378"/>
        <dbReference type="ChEBI" id="CHEBI:57856"/>
        <dbReference type="ChEBI" id="CHEBI:59789"/>
        <dbReference type="ChEBI" id="CHEBI:62729"/>
        <dbReference type="ChEBI" id="CHEBI:62731"/>
        <dbReference type="EC" id="2.1.1.222"/>
    </reaction>
</comment>
<comment type="pathway">
    <text evidence="1">Cofactor biosynthesis; ubiquinone biosynthesis.</text>
</comment>
<comment type="similarity">
    <text evidence="1">Belongs to the methyltransferase superfamily. UbiG/COQ3 family.</text>
</comment>
<accession>C0RFB8</accession>
<reference key="1">
    <citation type="submission" date="2009-03" db="EMBL/GenBank/DDBJ databases">
        <title>Brucella melitensis ATCC 23457 whole genome shotgun sequencing project.</title>
        <authorList>
            <person name="Setubal J.C."/>
            <person name="Boyle S."/>
            <person name="Crasta O.R."/>
            <person name="Gillespie J.J."/>
            <person name="Kenyon R.W."/>
            <person name="Lu J."/>
            <person name="Mane S."/>
            <person name="Nagrani S."/>
            <person name="Shallom J.M."/>
            <person name="Shallom S."/>
            <person name="Shukla M."/>
            <person name="Snyder E.E."/>
            <person name="Sobral B.W."/>
            <person name="Wattam A.R."/>
            <person name="Will R."/>
            <person name="Williams K."/>
            <person name="Yoo H."/>
            <person name="Munk C."/>
            <person name="Tapia R."/>
            <person name="Han C."/>
            <person name="Detter J.C."/>
            <person name="Bruce D."/>
            <person name="Brettin T.S."/>
        </authorList>
    </citation>
    <scope>NUCLEOTIDE SEQUENCE [LARGE SCALE GENOMIC DNA]</scope>
    <source>
        <strain>ATCC 23457</strain>
    </source>
</reference>
<name>UBIG_BRUMB</name>